<proteinExistence type="inferred from homology"/>
<keyword id="KW-0030">Aminoacyl-tRNA synthetase</keyword>
<keyword id="KW-0067">ATP-binding</keyword>
<keyword id="KW-0963">Cytoplasm</keyword>
<keyword id="KW-0436">Ligase</keyword>
<keyword id="KW-0479">Metal-binding</keyword>
<keyword id="KW-0547">Nucleotide-binding</keyword>
<keyword id="KW-0648">Protein biosynthesis</keyword>
<keyword id="KW-1185">Reference proteome</keyword>
<keyword id="KW-0862">Zinc</keyword>
<reference key="1">
    <citation type="submission" date="2006-10" db="EMBL/GenBank/DDBJ databases">
        <authorList>
            <person name="Fleischmann R.D."/>
            <person name="Dodson R.J."/>
            <person name="Haft D.H."/>
            <person name="Merkel J.S."/>
            <person name="Nelson W.C."/>
            <person name="Fraser C.M."/>
        </authorList>
    </citation>
    <scope>NUCLEOTIDE SEQUENCE [LARGE SCALE GENOMIC DNA]</scope>
    <source>
        <strain>ATCC 700084 / mc(2)155</strain>
    </source>
</reference>
<reference key="2">
    <citation type="journal article" date="2007" name="Genome Biol.">
        <title>Interrupted coding sequences in Mycobacterium smegmatis: authentic mutations or sequencing errors?</title>
        <authorList>
            <person name="Deshayes C."/>
            <person name="Perrodou E."/>
            <person name="Gallien S."/>
            <person name="Euphrasie D."/>
            <person name="Schaeffer C."/>
            <person name="Van-Dorsselaer A."/>
            <person name="Poch O."/>
            <person name="Lecompte O."/>
            <person name="Reyrat J.-M."/>
        </authorList>
    </citation>
    <scope>NUCLEOTIDE SEQUENCE [LARGE SCALE GENOMIC DNA]</scope>
    <source>
        <strain>ATCC 700084 / mc(2)155</strain>
    </source>
</reference>
<reference key="3">
    <citation type="journal article" date="2009" name="Genome Res.">
        <title>Ortho-proteogenomics: multiple proteomes investigation through orthology and a new MS-based protocol.</title>
        <authorList>
            <person name="Gallien S."/>
            <person name="Perrodou E."/>
            <person name="Carapito C."/>
            <person name="Deshayes C."/>
            <person name="Reyrat J.-M."/>
            <person name="Van Dorsselaer A."/>
            <person name="Poch O."/>
            <person name="Schaeffer C."/>
            <person name="Lecompte O."/>
        </authorList>
    </citation>
    <scope>NUCLEOTIDE SEQUENCE [LARGE SCALE GENOMIC DNA]</scope>
    <source>
        <strain>ATCC 700084 / mc(2)155</strain>
    </source>
</reference>
<dbReference type="EC" id="6.1.1.16" evidence="1"/>
<dbReference type="EMBL" id="CP000480">
    <property type="protein sequence ID" value="ABK74736.1"/>
    <property type="molecule type" value="Genomic_DNA"/>
</dbReference>
<dbReference type="EMBL" id="CP001663">
    <property type="protein sequence ID" value="AFP42347.1"/>
    <property type="status" value="ALT_INIT"/>
    <property type="molecule type" value="Genomic_DNA"/>
</dbReference>
<dbReference type="RefSeq" id="WP_011731017.1">
    <property type="nucleotide sequence ID" value="NZ_SIJM01000046.1"/>
</dbReference>
<dbReference type="RefSeq" id="YP_890296.1">
    <property type="nucleotide sequence ID" value="NC_008596.1"/>
</dbReference>
<dbReference type="SMR" id="A0R558"/>
<dbReference type="STRING" id="246196.MSMEG_6074"/>
<dbReference type="PaxDb" id="246196-MSMEI_5914"/>
<dbReference type="GeneID" id="93460706"/>
<dbReference type="KEGG" id="msg:MSMEI_5914"/>
<dbReference type="KEGG" id="msm:MSMEG_6074"/>
<dbReference type="PATRIC" id="fig|246196.19.peg.5912"/>
<dbReference type="eggNOG" id="COG0215">
    <property type="taxonomic scope" value="Bacteria"/>
</dbReference>
<dbReference type="OrthoDB" id="9815130at2"/>
<dbReference type="Proteomes" id="UP000000757">
    <property type="component" value="Chromosome"/>
</dbReference>
<dbReference type="Proteomes" id="UP000006158">
    <property type="component" value="Chromosome"/>
</dbReference>
<dbReference type="GO" id="GO:0005829">
    <property type="term" value="C:cytosol"/>
    <property type="evidence" value="ECO:0007669"/>
    <property type="project" value="TreeGrafter"/>
</dbReference>
<dbReference type="GO" id="GO:0005524">
    <property type="term" value="F:ATP binding"/>
    <property type="evidence" value="ECO:0007669"/>
    <property type="project" value="UniProtKB-UniRule"/>
</dbReference>
<dbReference type="GO" id="GO:0004817">
    <property type="term" value="F:cysteine-tRNA ligase activity"/>
    <property type="evidence" value="ECO:0007669"/>
    <property type="project" value="UniProtKB-UniRule"/>
</dbReference>
<dbReference type="GO" id="GO:0008270">
    <property type="term" value="F:zinc ion binding"/>
    <property type="evidence" value="ECO:0007669"/>
    <property type="project" value="UniProtKB-UniRule"/>
</dbReference>
<dbReference type="GO" id="GO:0006423">
    <property type="term" value="P:cysteinyl-tRNA aminoacylation"/>
    <property type="evidence" value="ECO:0007669"/>
    <property type="project" value="UniProtKB-UniRule"/>
</dbReference>
<dbReference type="CDD" id="cd00672">
    <property type="entry name" value="CysRS_core"/>
    <property type="match status" value="1"/>
</dbReference>
<dbReference type="FunFam" id="3.40.50.620:FF:000068">
    <property type="entry name" value="Cysteine--tRNA ligase"/>
    <property type="match status" value="1"/>
</dbReference>
<dbReference type="Gene3D" id="1.20.120.1910">
    <property type="entry name" value="Cysteine-tRNA ligase, C-terminal anti-codon recognition domain"/>
    <property type="match status" value="1"/>
</dbReference>
<dbReference type="Gene3D" id="3.40.50.620">
    <property type="entry name" value="HUPs"/>
    <property type="match status" value="1"/>
</dbReference>
<dbReference type="HAMAP" id="MF_00041">
    <property type="entry name" value="Cys_tRNA_synth"/>
    <property type="match status" value="1"/>
</dbReference>
<dbReference type="InterPro" id="IPR015803">
    <property type="entry name" value="Cys-tRNA-ligase"/>
</dbReference>
<dbReference type="InterPro" id="IPR015273">
    <property type="entry name" value="Cys-tRNA-synt_Ia_DALR"/>
</dbReference>
<dbReference type="InterPro" id="IPR024909">
    <property type="entry name" value="Cys-tRNA/MSH_ligase"/>
</dbReference>
<dbReference type="InterPro" id="IPR056411">
    <property type="entry name" value="CysS_C"/>
</dbReference>
<dbReference type="InterPro" id="IPR014729">
    <property type="entry name" value="Rossmann-like_a/b/a_fold"/>
</dbReference>
<dbReference type="InterPro" id="IPR032678">
    <property type="entry name" value="tRNA-synt_1_cat_dom"/>
</dbReference>
<dbReference type="InterPro" id="IPR009080">
    <property type="entry name" value="tRNAsynth_Ia_anticodon-bd"/>
</dbReference>
<dbReference type="NCBIfam" id="TIGR00435">
    <property type="entry name" value="cysS"/>
    <property type="match status" value="1"/>
</dbReference>
<dbReference type="PANTHER" id="PTHR10890:SF30">
    <property type="entry name" value="CYSTEINE--TRNA LIGASE"/>
    <property type="match status" value="1"/>
</dbReference>
<dbReference type="PANTHER" id="PTHR10890">
    <property type="entry name" value="CYSTEINYL-TRNA SYNTHETASE"/>
    <property type="match status" value="1"/>
</dbReference>
<dbReference type="Pfam" id="PF23493">
    <property type="entry name" value="CysS_C"/>
    <property type="match status" value="1"/>
</dbReference>
<dbReference type="Pfam" id="PF09190">
    <property type="entry name" value="DALR_2"/>
    <property type="match status" value="1"/>
</dbReference>
<dbReference type="Pfam" id="PF01406">
    <property type="entry name" value="tRNA-synt_1e"/>
    <property type="match status" value="1"/>
</dbReference>
<dbReference type="PRINTS" id="PR00983">
    <property type="entry name" value="TRNASYNTHCYS"/>
</dbReference>
<dbReference type="SMART" id="SM00840">
    <property type="entry name" value="DALR_2"/>
    <property type="match status" value="1"/>
</dbReference>
<dbReference type="SUPFAM" id="SSF47323">
    <property type="entry name" value="Anticodon-binding domain of a subclass of class I aminoacyl-tRNA synthetases"/>
    <property type="match status" value="1"/>
</dbReference>
<dbReference type="SUPFAM" id="SSF52374">
    <property type="entry name" value="Nucleotidylyl transferase"/>
    <property type="match status" value="1"/>
</dbReference>
<accession>A0R558</accession>
<accession>I7G9V3</accession>
<name>SYC_MYCS2</name>
<evidence type="ECO:0000255" key="1">
    <source>
        <dbReference type="HAMAP-Rule" id="MF_00041"/>
    </source>
</evidence>
<evidence type="ECO:0000305" key="2"/>
<gene>
    <name evidence="1" type="primary">cysS</name>
    <name type="synonym">cysS1</name>
    <name type="ordered locus">MSMEG_6074</name>
    <name type="ordered locus">MSMEI_5914</name>
</gene>
<protein>
    <recommendedName>
        <fullName evidence="1">Cysteine--tRNA ligase</fullName>
        <ecNumber evidence="1">6.1.1.16</ecNumber>
    </recommendedName>
    <alternativeName>
        <fullName evidence="1">Cysteinyl-tRNA synthetase</fullName>
        <shortName evidence="1">CysRS</shortName>
    </alternativeName>
</protein>
<comment type="catalytic activity">
    <reaction evidence="1">
        <text>tRNA(Cys) + L-cysteine + ATP = L-cysteinyl-tRNA(Cys) + AMP + diphosphate</text>
        <dbReference type="Rhea" id="RHEA:17773"/>
        <dbReference type="Rhea" id="RHEA-COMP:9661"/>
        <dbReference type="Rhea" id="RHEA-COMP:9679"/>
        <dbReference type="ChEBI" id="CHEBI:30616"/>
        <dbReference type="ChEBI" id="CHEBI:33019"/>
        <dbReference type="ChEBI" id="CHEBI:35235"/>
        <dbReference type="ChEBI" id="CHEBI:78442"/>
        <dbReference type="ChEBI" id="CHEBI:78517"/>
        <dbReference type="ChEBI" id="CHEBI:456215"/>
        <dbReference type="EC" id="6.1.1.16"/>
    </reaction>
</comment>
<comment type="cofactor">
    <cofactor evidence="1">
        <name>Zn(2+)</name>
        <dbReference type="ChEBI" id="CHEBI:29105"/>
    </cofactor>
    <text evidence="1">Binds 1 zinc ion per subunit.</text>
</comment>
<comment type="subunit">
    <text evidence="1">Monomer.</text>
</comment>
<comment type="subcellular location">
    <subcellularLocation>
        <location evidence="1">Cytoplasm</location>
    </subcellularLocation>
</comment>
<comment type="similarity">
    <text evidence="1">Belongs to the class-I aminoacyl-tRNA synthetase family.</text>
</comment>
<comment type="sequence caution" evidence="2">
    <conflict type="erroneous initiation">
        <sequence resource="EMBL-CDS" id="AFP42347"/>
    </conflict>
    <text>Truncated N-terminus.</text>
</comment>
<organism>
    <name type="scientific">Mycolicibacterium smegmatis (strain ATCC 700084 / mc(2)155)</name>
    <name type="common">Mycobacterium smegmatis</name>
    <dbReference type="NCBI Taxonomy" id="246196"/>
    <lineage>
        <taxon>Bacteria</taxon>
        <taxon>Bacillati</taxon>
        <taxon>Actinomycetota</taxon>
        <taxon>Actinomycetes</taxon>
        <taxon>Mycobacteriales</taxon>
        <taxon>Mycobacteriaceae</taxon>
        <taxon>Mycolicibacterium</taxon>
    </lineage>
</organism>
<sequence length="477" mass="52303">MTDRAQAVGSGPELGLRLYDTMAGAVRDFVPLRPGHASIYLCGATVQGLPHIGHVRSGVAFDVLRRWLTANGYDVAFIRNVTDIDDKILNKAADAGRPWWEWAATFERAFSAAYDALGVLPPSAEPRATGHITQMVELIERLIDKGHAYAAGGDVYFDVLSLPDYGQLSGHRIDDVHQGEGVATGKRDQRDFTLWKGAKPGEPSWPTPWGRGRPGWHTECVAMCEAYLGPEFDIHAGGMDLVFPHHENEIAQAHGAGDGFARYWLHNGWVTMGGEKMSKSLGNVLSIPAVLQRVRAAELRYYLGSAHYRSMLEFSETALQDAVKAYTGIEDFLHRVCSRVGSVPIGEWTPKFAAALNDDLSVPIALAEIHAARAEGNRALDSGDHQTAMQQASSIRAMMDILGCDPLNERWESRDATSAALKAVDVLVQWALASRAEARERRDWAAADAIRDRLKEAGIEVTDTADGPQWALIERDK</sequence>
<feature type="chain" id="PRO_0000332854" description="Cysteine--tRNA ligase">
    <location>
        <begin position="1"/>
        <end position="477"/>
    </location>
</feature>
<feature type="short sequence motif" description="'HIGH' region">
    <location>
        <begin position="44"/>
        <end position="54"/>
    </location>
</feature>
<feature type="short sequence motif" description="'KMSKS' region">
    <location>
        <begin position="276"/>
        <end position="280"/>
    </location>
</feature>
<feature type="binding site" evidence="1">
    <location>
        <position position="42"/>
    </location>
    <ligand>
        <name>Zn(2+)</name>
        <dbReference type="ChEBI" id="CHEBI:29105"/>
    </ligand>
</feature>
<feature type="binding site" evidence="1">
    <location>
        <position position="220"/>
    </location>
    <ligand>
        <name>Zn(2+)</name>
        <dbReference type="ChEBI" id="CHEBI:29105"/>
    </ligand>
</feature>
<feature type="binding site" evidence="1">
    <location>
        <position position="245"/>
    </location>
    <ligand>
        <name>Zn(2+)</name>
        <dbReference type="ChEBI" id="CHEBI:29105"/>
    </ligand>
</feature>
<feature type="binding site" evidence="1">
    <location>
        <position position="249"/>
    </location>
    <ligand>
        <name>Zn(2+)</name>
        <dbReference type="ChEBI" id="CHEBI:29105"/>
    </ligand>
</feature>
<feature type="binding site" evidence="1">
    <location>
        <position position="279"/>
    </location>
    <ligand>
        <name>ATP</name>
        <dbReference type="ChEBI" id="CHEBI:30616"/>
    </ligand>
</feature>